<gene>
    <name type="primary">femA</name>
    <name type="ordered locus">MW1261</name>
</gene>
<dbReference type="EC" id="2.3.2.17"/>
<dbReference type="EMBL" id="BA000033">
    <property type="protein sequence ID" value="BAB95126.1"/>
    <property type="molecule type" value="Genomic_DNA"/>
</dbReference>
<dbReference type="RefSeq" id="WP_000673309.1">
    <property type="nucleotide sequence ID" value="NC_003923.1"/>
</dbReference>
<dbReference type="SMR" id="P0A0A4"/>
<dbReference type="KEGG" id="sam:MW1261"/>
<dbReference type="HOGENOM" id="CLU_048411_1_0_9"/>
<dbReference type="GO" id="GO:0005737">
    <property type="term" value="C:cytoplasm"/>
    <property type="evidence" value="ECO:0007669"/>
    <property type="project" value="UniProtKB-SubCell"/>
</dbReference>
<dbReference type="GO" id="GO:0016755">
    <property type="term" value="F:aminoacyltransferase activity"/>
    <property type="evidence" value="ECO:0007669"/>
    <property type="project" value="InterPro"/>
</dbReference>
<dbReference type="GO" id="GO:0000166">
    <property type="term" value="F:nucleotide binding"/>
    <property type="evidence" value="ECO:0007669"/>
    <property type="project" value="InterPro"/>
</dbReference>
<dbReference type="GO" id="GO:0071555">
    <property type="term" value="P:cell wall organization"/>
    <property type="evidence" value="ECO:0007669"/>
    <property type="project" value="UniProtKB-KW"/>
</dbReference>
<dbReference type="GO" id="GO:0009252">
    <property type="term" value="P:peptidoglycan biosynthetic process"/>
    <property type="evidence" value="ECO:0007669"/>
    <property type="project" value="UniProtKB-KW"/>
</dbReference>
<dbReference type="GO" id="GO:0008360">
    <property type="term" value="P:regulation of cell shape"/>
    <property type="evidence" value="ECO:0007669"/>
    <property type="project" value="UniProtKB-KW"/>
</dbReference>
<dbReference type="GO" id="GO:0046677">
    <property type="term" value="P:response to antibiotic"/>
    <property type="evidence" value="ECO:0007669"/>
    <property type="project" value="UniProtKB-KW"/>
</dbReference>
<dbReference type="Gene3D" id="1.20.58.90">
    <property type="match status" value="1"/>
</dbReference>
<dbReference type="Gene3D" id="3.40.630.30">
    <property type="match status" value="2"/>
</dbReference>
<dbReference type="InterPro" id="IPR016181">
    <property type="entry name" value="Acyl_CoA_acyltransferase"/>
</dbReference>
<dbReference type="InterPro" id="IPR003447">
    <property type="entry name" value="FEMABX"/>
</dbReference>
<dbReference type="InterPro" id="IPR050644">
    <property type="entry name" value="PG_Glycine_Bridge_Synth"/>
</dbReference>
<dbReference type="InterPro" id="IPR010978">
    <property type="entry name" value="tRNA-bd_arm"/>
</dbReference>
<dbReference type="PANTHER" id="PTHR36174:SF2">
    <property type="entry name" value="AMINOACYLTRANSFERASE FEMA"/>
    <property type="match status" value="1"/>
</dbReference>
<dbReference type="PANTHER" id="PTHR36174">
    <property type="entry name" value="LIPID II:GLYCINE GLYCYLTRANSFERASE"/>
    <property type="match status" value="1"/>
</dbReference>
<dbReference type="Pfam" id="PF02388">
    <property type="entry name" value="FemAB"/>
    <property type="match status" value="1"/>
</dbReference>
<dbReference type="SUPFAM" id="SSF55729">
    <property type="entry name" value="Acyl-CoA N-acyltransferases (Nat)"/>
    <property type="match status" value="2"/>
</dbReference>
<dbReference type="SUPFAM" id="SSF46589">
    <property type="entry name" value="tRNA-binding arm"/>
    <property type="match status" value="1"/>
</dbReference>
<dbReference type="PROSITE" id="PS51191">
    <property type="entry name" value="FEMABX"/>
    <property type="match status" value="1"/>
</dbReference>
<accession>P0A0A4</accession>
<accession>P14304</accession>
<comment type="function">
    <text evidence="1">Catalyzes the formation of the pentaglycine interpeptide bridge, which is characteristic of the S.aureus peptidoglycan. Adds glycines 2 and 3 of the pentaglycine bridge, using glycyl-tRNA(Gly) as donor. Involved in resistance to methicillin (By similarity).</text>
</comment>
<comment type="catalytic activity">
    <reaction>
        <text>beta-D-GlcNAc-(1-&gt;4)-Mur2Ac(oyl-L-Ala-D-isoglutaminyl-L-Lys-(N(6)-Gly)-D-Ala-D-Ala)-di-trans,octa-cis-undecaprenyl diphosphate + 2 glycyl-tRNA(Gly) = MurNAc-L-Ala-D-isoglutaminyl-L-Lys-(N(6)-tri-Gly)-D-Ala-D-Ala-diphospho-di-trans,octa-cis-undecaprenyl-GlcNAc + 2 tRNA(Gly) + 2 H(+)</text>
        <dbReference type="Rhea" id="RHEA:30439"/>
        <dbReference type="Rhea" id="RHEA-COMP:9664"/>
        <dbReference type="Rhea" id="RHEA-COMP:9683"/>
        <dbReference type="ChEBI" id="CHEBI:15378"/>
        <dbReference type="ChEBI" id="CHEBI:62234"/>
        <dbReference type="ChEBI" id="CHEBI:62235"/>
        <dbReference type="ChEBI" id="CHEBI:78442"/>
        <dbReference type="ChEBI" id="CHEBI:78522"/>
        <dbReference type="EC" id="2.3.2.17"/>
    </reaction>
</comment>
<comment type="subunit">
    <text evidence="1">Homodimer. Interacts with FemB (By similarity).</text>
</comment>
<comment type="subcellular location">
    <subcellularLocation>
        <location evidence="1">Cytoplasm</location>
    </subcellularLocation>
</comment>
<comment type="similarity">
    <text evidence="2">Belongs to the FemABX family.</text>
</comment>
<protein>
    <recommendedName>
        <fullName>Aminoacyltransferase FemA</fullName>
        <ecNumber>2.3.2.17</ecNumber>
    </recommendedName>
    <alternativeName>
        <fullName>Factor essential for expression of methicillin resistance A</fullName>
    </alternativeName>
    <alternativeName>
        <fullName>N-acetylmuramoyl-L-alanyl-D-glutamyl-L-lysyl-(N6-glycyl)-D-alanyl-D-alanine-diphosphoundecaprenyl-N-acetylglucosamine:glycine glycyltransferase</fullName>
    </alternativeName>
</protein>
<evidence type="ECO:0000250" key="1"/>
<evidence type="ECO:0000305" key="2"/>
<feature type="chain" id="PRO_0000204736" description="Aminoacyltransferase FemA">
    <location>
        <begin position="1"/>
        <end position="420"/>
    </location>
</feature>
<proteinExistence type="inferred from homology"/>
<organism>
    <name type="scientific">Staphylococcus aureus (strain MW2)</name>
    <dbReference type="NCBI Taxonomy" id="196620"/>
    <lineage>
        <taxon>Bacteria</taxon>
        <taxon>Bacillati</taxon>
        <taxon>Bacillota</taxon>
        <taxon>Bacilli</taxon>
        <taxon>Bacillales</taxon>
        <taxon>Staphylococcaceae</taxon>
        <taxon>Staphylococcus</taxon>
    </lineage>
</organism>
<reference key="1">
    <citation type="journal article" date="2002" name="Lancet">
        <title>Genome and virulence determinants of high virulence community-acquired MRSA.</title>
        <authorList>
            <person name="Baba T."/>
            <person name="Takeuchi F."/>
            <person name="Kuroda M."/>
            <person name="Yuzawa H."/>
            <person name="Aoki K."/>
            <person name="Oguchi A."/>
            <person name="Nagai Y."/>
            <person name="Iwama N."/>
            <person name="Asano K."/>
            <person name="Naimi T."/>
            <person name="Kuroda H."/>
            <person name="Cui L."/>
            <person name="Yamamoto K."/>
            <person name="Hiramatsu K."/>
        </authorList>
    </citation>
    <scope>NUCLEOTIDE SEQUENCE [LARGE SCALE GENOMIC DNA]</scope>
    <source>
        <strain>MW2</strain>
    </source>
</reference>
<keyword id="KW-0012">Acyltransferase</keyword>
<keyword id="KW-0046">Antibiotic resistance</keyword>
<keyword id="KW-0133">Cell shape</keyword>
<keyword id="KW-0961">Cell wall biogenesis/degradation</keyword>
<keyword id="KW-0963">Cytoplasm</keyword>
<keyword id="KW-0573">Peptidoglycan synthesis</keyword>
<keyword id="KW-0808">Transferase</keyword>
<name>FEMA_STAAW</name>
<sequence length="420" mass="49124">MKFTNLTAKEFGAFTDSMPYSHFTQTVGHYELKLAEGYETHLVGIKNNNNEVIAACLLTAVPVMKVFKYFYSNRGPVIDYENQELVHFFFNELSKYVKKHRCLYLHIDPYLPYQYLNHDGEITGNAGNDWFFDKMSNLGFEHTGFHKGFDPVLQIRYHSVLDLKDKTADDIIKNMDGLRKRNTKKVKKNGVKVRFLSEEELPIFRSFMEDTSESKAFADRDDKFYYNRLKYYKDRVLVPLAYINFDEYIKELNEERDILNKDLNKALKDIEKRPENKKAHNKRDNLQQQLDANEQKIEEGKRLQEEHGNELPISAGFFFINPFEVVYYAGGTSNAFRHFAGSYAVQWEMINYALNHGIDRYNFYGVSGKFTEDAEDAGVVKFKKGYNAEIIEYVGDFIKPINKPVYAAYTALKKVKDRIF</sequence>